<evidence type="ECO:0000255" key="1">
    <source>
        <dbReference type="HAMAP-Rule" id="MF_00180"/>
    </source>
</evidence>
<reference key="1">
    <citation type="journal article" date="2001" name="Proc. Natl. Acad. Sci. U.S.A.">
        <title>Complete genomic sequence of Pasteurella multocida Pm70.</title>
        <authorList>
            <person name="May B.J."/>
            <person name="Zhang Q."/>
            <person name="Li L.L."/>
            <person name="Paustian M.L."/>
            <person name="Whittam T.S."/>
            <person name="Kapur V."/>
        </authorList>
    </citation>
    <scope>NUCLEOTIDE SEQUENCE [LARGE SCALE GENOMIC DNA]</scope>
    <source>
        <strain>Pm70</strain>
    </source>
</reference>
<organism>
    <name type="scientific">Pasteurella multocida (strain Pm70)</name>
    <dbReference type="NCBI Taxonomy" id="272843"/>
    <lineage>
        <taxon>Bacteria</taxon>
        <taxon>Pseudomonadati</taxon>
        <taxon>Pseudomonadota</taxon>
        <taxon>Gammaproteobacteria</taxon>
        <taxon>Pasteurellales</taxon>
        <taxon>Pasteurellaceae</taxon>
        <taxon>Pasteurella</taxon>
    </lineage>
</organism>
<comment type="function">
    <text evidence="1">Catalyzes the conversion of D-ribulose 5-phosphate to formate and 3,4-dihydroxy-2-butanone 4-phosphate.</text>
</comment>
<comment type="catalytic activity">
    <reaction evidence="1">
        <text>D-ribulose 5-phosphate = (2S)-2-hydroxy-3-oxobutyl phosphate + formate + H(+)</text>
        <dbReference type="Rhea" id="RHEA:18457"/>
        <dbReference type="ChEBI" id="CHEBI:15378"/>
        <dbReference type="ChEBI" id="CHEBI:15740"/>
        <dbReference type="ChEBI" id="CHEBI:58121"/>
        <dbReference type="ChEBI" id="CHEBI:58830"/>
        <dbReference type="EC" id="4.1.99.12"/>
    </reaction>
</comment>
<comment type="cofactor">
    <cofactor evidence="1">
        <name>Mg(2+)</name>
        <dbReference type="ChEBI" id="CHEBI:18420"/>
    </cofactor>
    <cofactor evidence="1">
        <name>Mn(2+)</name>
        <dbReference type="ChEBI" id="CHEBI:29035"/>
    </cofactor>
    <text evidence="1">Binds 2 divalent metal cations per subunit. Magnesium or manganese.</text>
</comment>
<comment type="pathway">
    <text evidence="1">Cofactor biosynthesis; riboflavin biosynthesis; 2-hydroxy-3-oxobutyl phosphate from D-ribulose 5-phosphate: step 1/1.</text>
</comment>
<comment type="subunit">
    <text evidence="1">Homodimer.</text>
</comment>
<comment type="similarity">
    <text evidence="1">Belongs to the DHBP synthase family.</text>
</comment>
<sequence>MNQSILSPFGQSEERAIAAINAFKQGNGVLVLDDEDRENEGDLIFPAETITVEQMTMLIRYGSGIVCLCLSDEICQQLDLPPMVTENTSVNKTAFTVTIEAAKGVSTGVSATDRVTTIRAAVADNAKPSDLSRPGHIFPLRAMTGGVLKRRGHTEASVDLARLAGYKAAGVICEITNDDGSMARAPEIVTFAQKFGFPVVTIEDLVAYRQKYDV</sequence>
<proteinExistence type="inferred from homology"/>
<feature type="chain" id="PRO_0000151805" description="3,4-dihydroxy-2-butanone 4-phosphate synthase">
    <location>
        <begin position="1"/>
        <end position="214"/>
    </location>
</feature>
<feature type="binding site" evidence="1">
    <location>
        <begin position="37"/>
        <end position="38"/>
    </location>
    <ligand>
        <name>D-ribulose 5-phosphate</name>
        <dbReference type="ChEBI" id="CHEBI:58121"/>
    </ligand>
</feature>
<feature type="binding site" evidence="1">
    <location>
        <position position="38"/>
    </location>
    <ligand>
        <name>Mg(2+)</name>
        <dbReference type="ChEBI" id="CHEBI:18420"/>
        <label>1</label>
    </ligand>
</feature>
<feature type="binding site" evidence="1">
    <location>
        <position position="38"/>
    </location>
    <ligand>
        <name>Mg(2+)</name>
        <dbReference type="ChEBI" id="CHEBI:18420"/>
        <label>2</label>
    </ligand>
</feature>
<feature type="binding site" evidence="1">
    <location>
        <position position="42"/>
    </location>
    <ligand>
        <name>D-ribulose 5-phosphate</name>
        <dbReference type="ChEBI" id="CHEBI:58121"/>
    </ligand>
</feature>
<feature type="binding site" evidence="1">
    <location>
        <begin position="150"/>
        <end position="154"/>
    </location>
    <ligand>
        <name>D-ribulose 5-phosphate</name>
        <dbReference type="ChEBI" id="CHEBI:58121"/>
    </ligand>
</feature>
<feature type="binding site" evidence="1">
    <location>
        <position position="153"/>
    </location>
    <ligand>
        <name>Mg(2+)</name>
        <dbReference type="ChEBI" id="CHEBI:18420"/>
        <label>2</label>
    </ligand>
</feature>
<feature type="binding site" evidence="1">
    <location>
        <position position="174"/>
    </location>
    <ligand>
        <name>D-ribulose 5-phosphate</name>
        <dbReference type="ChEBI" id="CHEBI:58121"/>
    </ligand>
</feature>
<feature type="site" description="Essential for catalytic activity" evidence="1">
    <location>
        <position position="136"/>
    </location>
</feature>
<feature type="site" description="Essential for catalytic activity" evidence="1">
    <location>
        <position position="174"/>
    </location>
</feature>
<accession>P57940</accession>
<protein>
    <recommendedName>
        <fullName evidence="1">3,4-dihydroxy-2-butanone 4-phosphate synthase</fullName>
        <shortName evidence="1">DHBP synthase</shortName>
        <ecNumber evidence="1">4.1.99.12</ecNumber>
    </recommendedName>
</protein>
<name>RIBB_PASMU</name>
<gene>
    <name evidence="1" type="primary">ribB</name>
    <name type="ordered locus">PM1385</name>
</gene>
<keyword id="KW-0456">Lyase</keyword>
<keyword id="KW-0460">Magnesium</keyword>
<keyword id="KW-0464">Manganese</keyword>
<keyword id="KW-0479">Metal-binding</keyword>
<keyword id="KW-1185">Reference proteome</keyword>
<keyword id="KW-0686">Riboflavin biosynthesis</keyword>
<dbReference type="EC" id="4.1.99.12" evidence="1"/>
<dbReference type="EMBL" id="AE004439">
    <property type="protein sequence ID" value="AAK03469.1"/>
    <property type="molecule type" value="Genomic_DNA"/>
</dbReference>
<dbReference type="RefSeq" id="WP_005724006.1">
    <property type="nucleotide sequence ID" value="NC_002663.1"/>
</dbReference>
<dbReference type="SMR" id="P57940"/>
<dbReference type="STRING" id="272843.PM1385"/>
<dbReference type="EnsemblBacteria" id="AAK03469">
    <property type="protein sequence ID" value="AAK03469"/>
    <property type="gene ID" value="PM1385"/>
</dbReference>
<dbReference type="GeneID" id="77207056"/>
<dbReference type="KEGG" id="pmu:PM1385"/>
<dbReference type="HOGENOM" id="CLU_020273_3_0_6"/>
<dbReference type="OrthoDB" id="9793111at2"/>
<dbReference type="UniPathway" id="UPA00275">
    <property type="reaction ID" value="UER00399"/>
</dbReference>
<dbReference type="Proteomes" id="UP000000809">
    <property type="component" value="Chromosome"/>
</dbReference>
<dbReference type="GO" id="GO:0005829">
    <property type="term" value="C:cytosol"/>
    <property type="evidence" value="ECO:0007669"/>
    <property type="project" value="TreeGrafter"/>
</dbReference>
<dbReference type="GO" id="GO:0008686">
    <property type="term" value="F:3,4-dihydroxy-2-butanone-4-phosphate synthase activity"/>
    <property type="evidence" value="ECO:0007669"/>
    <property type="project" value="UniProtKB-UniRule"/>
</dbReference>
<dbReference type="GO" id="GO:0000287">
    <property type="term" value="F:magnesium ion binding"/>
    <property type="evidence" value="ECO:0007669"/>
    <property type="project" value="UniProtKB-UniRule"/>
</dbReference>
<dbReference type="GO" id="GO:0030145">
    <property type="term" value="F:manganese ion binding"/>
    <property type="evidence" value="ECO:0007669"/>
    <property type="project" value="UniProtKB-UniRule"/>
</dbReference>
<dbReference type="GO" id="GO:0009231">
    <property type="term" value="P:riboflavin biosynthetic process"/>
    <property type="evidence" value="ECO:0007669"/>
    <property type="project" value="UniProtKB-UniRule"/>
</dbReference>
<dbReference type="FunFam" id="3.90.870.10:FF:000002">
    <property type="entry name" value="3,4-dihydroxy-2-butanone 4-phosphate synthase"/>
    <property type="match status" value="1"/>
</dbReference>
<dbReference type="Gene3D" id="3.90.870.10">
    <property type="entry name" value="DHBP synthase"/>
    <property type="match status" value="1"/>
</dbReference>
<dbReference type="HAMAP" id="MF_00180">
    <property type="entry name" value="RibB"/>
    <property type="match status" value="1"/>
</dbReference>
<dbReference type="InterPro" id="IPR017945">
    <property type="entry name" value="DHBP_synth_RibB-like_a/b_dom"/>
</dbReference>
<dbReference type="InterPro" id="IPR000422">
    <property type="entry name" value="DHBP_synthase_RibB"/>
</dbReference>
<dbReference type="NCBIfam" id="TIGR00506">
    <property type="entry name" value="ribB"/>
    <property type="match status" value="1"/>
</dbReference>
<dbReference type="PANTHER" id="PTHR21327:SF38">
    <property type="entry name" value="3,4-DIHYDROXY-2-BUTANONE 4-PHOSPHATE SYNTHASE"/>
    <property type="match status" value="1"/>
</dbReference>
<dbReference type="PANTHER" id="PTHR21327">
    <property type="entry name" value="GTP CYCLOHYDROLASE II-RELATED"/>
    <property type="match status" value="1"/>
</dbReference>
<dbReference type="Pfam" id="PF00926">
    <property type="entry name" value="DHBP_synthase"/>
    <property type="match status" value="1"/>
</dbReference>
<dbReference type="SUPFAM" id="SSF55821">
    <property type="entry name" value="YrdC/RibB"/>
    <property type="match status" value="1"/>
</dbReference>